<name>RAMB_MYCTU</name>
<accession>P9WMI1</accession>
<accession>L0T6J8</accession>
<accession>O53750</accession>
<accession>Q7D9R8</accession>
<sequence length="474" mass="53072">MSKTYVGSRVRQLRNERGFSQAALAQMLEISPSYLNQIEHDVRPLTVAVLLRITEVFGVDATFFASQDDTRLVAELREVTLDRDLDIAIDPHEVAEMVSAHPGLACAVVNLHRRYRITTAQLAAATEERFSDGSGRGSITMPHEEVRDYFYQRQNYLHALDTAAEDLTAQMRMHHGDLARELTRRLTEVHGVRINKRIDLGDTVLHRYDPATNTLEISSHLSPGQQVFKMAAELAYLEFGDLIDAMVTDGKFTSAESRTLARLGLANYFAAATVLPYRQFHDVAENFRYDVERLSAFYSVSYETIAHRLSTLQRPSMRGVPFTFVRVDRAGNMSKRQSATGFHFSSSGGTCPLWNVYETFANPGKILVQIAQMPDGRNYLWVARTVELRAARYGQPGKTFAIGLGCELRHAHRLVYSEGLDLSGDPNTAATPIGAGCRVCERDNCPQRAFPALGRALDLDEHRSTVSPYLVKQL</sequence>
<comment type="function">
    <text evidence="3">Involved in the control of the glyoxylate cycle. RamB negatively controls the expression of icl expression during growth on acetate as the sole carbon source. Does not regulate the expression of other genes involved in acetate metabolism.</text>
</comment>
<comment type="induction">
    <text evidence="3 4">RamB represses its own expression (independently of the available carbon source) and is negatively regulated by PrpR.</text>
</comment>
<comment type="disruption phenotype">
    <text evidence="3">Cells lacking this gene show an expression level of icl higher than wild-type during incubation with glucose while remaining approximately at the same level than wild-type during incubation with acetate. ramB expression levels are found to be higher in the deletion mutant than in the wild-type during incubation with acetate or glucose.</text>
</comment>
<comment type="miscellaneous">
    <text evidence="2">Was identified as a high-confidence drug target.</text>
</comment>
<comment type="similarity">
    <text evidence="6">Belongs to the short-chain fatty acyl-CoA assimilation regulator (ScfR) family.</text>
</comment>
<protein>
    <recommendedName>
        <fullName evidence="5">HTH-type transcriptional regulator RamB</fullName>
    </recommendedName>
    <alternativeName>
        <fullName evidence="6">icl1 and ramB operon repressor protein</fullName>
    </alternativeName>
</protein>
<proteinExistence type="evidence at protein level"/>
<evidence type="ECO:0000255" key="1">
    <source>
        <dbReference type="PROSITE-ProRule" id="PRU00257"/>
    </source>
</evidence>
<evidence type="ECO:0000269" key="2">
    <source>
    </source>
</evidence>
<evidence type="ECO:0000269" key="3">
    <source>
    </source>
</evidence>
<evidence type="ECO:0000269" key="4">
    <source>
    </source>
</evidence>
<evidence type="ECO:0000303" key="5">
    <source>
    </source>
</evidence>
<evidence type="ECO:0000305" key="6"/>
<organism>
    <name type="scientific">Mycobacterium tuberculosis (strain ATCC 25618 / H37Rv)</name>
    <dbReference type="NCBI Taxonomy" id="83332"/>
    <lineage>
        <taxon>Bacteria</taxon>
        <taxon>Bacillati</taxon>
        <taxon>Actinomycetota</taxon>
        <taxon>Actinomycetes</taxon>
        <taxon>Mycobacteriales</taxon>
        <taxon>Mycobacteriaceae</taxon>
        <taxon>Mycobacterium</taxon>
        <taxon>Mycobacterium tuberculosis complex</taxon>
    </lineage>
</organism>
<keyword id="KW-0238">DNA-binding</keyword>
<keyword id="KW-1185">Reference proteome</keyword>
<keyword id="KW-0678">Repressor</keyword>
<keyword id="KW-0804">Transcription</keyword>
<keyword id="KW-0805">Transcription regulation</keyword>
<reference key="1">
    <citation type="journal article" date="1998" name="Nature">
        <title>Deciphering the biology of Mycobacterium tuberculosis from the complete genome sequence.</title>
        <authorList>
            <person name="Cole S.T."/>
            <person name="Brosch R."/>
            <person name="Parkhill J."/>
            <person name="Garnier T."/>
            <person name="Churcher C.M."/>
            <person name="Harris D.E."/>
            <person name="Gordon S.V."/>
            <person name="Eiglmeier K."/>
            <person name="Gas S."/>
            <person name="Barry C.E. III"/>
            <person name="Tekaia F."/>
            <person name="Badcock K."/>
            <person name="Basham D."/>
            <person name="Brown D."/>
            <person name="Chillingworth T."/>
            <person name="Connor R."/>
            <person name="Davies R.M."/>
            <person name="Devlin K."/>
            <person name="Feltwell T."/>
            <person name="Gentles S."/>
            <person name="Hamlin N."/>
            <person name="Holroyd S."/>
            <person name="Hornsby T."/>
            <person name="Jagels K."/>
            <person name="Krogh A."/>
            <person name="McLean J."/>
            <person name="Moule S."/>
            <person name="Murphy L.D."/>
            <person name="Oliver S."/>
            <person name="Osborne J."/>
            <person name="Quail M.A."/>
            <person name="Rajandream M.A."/>
            <person name="Rogers J."/>
            <person name="Rutter S."/>
            <person name="Seeger K."/>
            <person name="Skelton S."/>
            <person name="Squares S."/>
            <person name="Squares R."/>
            <person name="Sulston J.E."/>
            <person name="Taylor K."/>
            <person name="Whitehead S."/>
            <person name="Barrell B.G."/>
        </authorList>
    </citation>
    <scope>NUCLEOTIDE SEQUENCE [LARGE SCALE GENOMIC DNA]</scope>
    <source>
        <strain>ATCC 25618 / H37Rv</strain>
    </source>
</reference>
<reference key="2">
    <citation type="journal article" date="2008" name="BMC Syst. Biol.">
        <title>targetTB: a target identification pipeline for Mycobacterium tuberculosis through an interactome, reactome and genome-scale structural analysis.</title>
        <authorList>
            <person name="Raman K."/>
            <person name="Yeturu K."/>
            <person name="Chandra N."/>
        </authorList>
    </citation>
    <scope>IDENTIFICATION AS A DRUG TARGET [LARGE SCALE ANALYSIS]</scope>
</reference>
<reference key="3">
    <citation type="journal article" date="2009" name="J. Bacteriol.">
        <title>Role of the transcriptional regulator RamB (Rv0465c) in the control of the glyoxylate cycle in Mycobacterium tuberculosis.</title>
        <authorList>
            <person name="Micklinghoff J.C."/>
            <person name="Breitinger K.J."/>
            <person name="Schmidt M."/>
            <person name="Geffers R."/>
            <person name="Eikmanns B.J."/>
            <person name="Bange F.C."/>
        </authorList>
    </citation>
    <scope>FUNCTION</scope>
    <scope>DNA-BINDING</scope>
    <scope>INDUCTION</scope>
    <scope>DISRUPTION PHENOTYPE</scope>
    <scope>GENE NAME</scope>
    <source>
        <strain>ATCC 25618 / H37Rv</strain>
    </source>
</reference>
<reference key="4">
    <citation type="journal article" date="2011" name="Mol. Cell. Proteomics">
        <title>Proteogenomic analysis of Mycobacterium tuberculosis by high resolution mass spectrometry.</title>
        <authorList>
            <person name="Kelkar D.S."/>
            <person name="Kumar D."/>
            <person name="Kumar P."/>
            <person name="Balakrishnan L."/>
            <person name="Muthusamy B."/>
            <person name="Yadav A.K."/>
            <person name="Shrivastava P."/>
            <person name="Marimuthu A."/>
            <person name="Anand S."/>
            <person name="Sundaram H."/>
            <person name="Kingsbury R."/>
            <person name="Harsha H.C."/>
            <person name="Nair B."/>
            <person name="Prasad T.S."/>
            <person name="Chauhan D.S."/>
            <person name="Katoch K."/>
            <person name="Katoch V.M."/>
            <person name="Kumar P."/>
            <person name="Chaerkady R."/>
            <person name="Ramachandran S."/>
            <person name="Dash D."/>
            <person name="Pandey A."/>
        </authorList>
    </citation>
    <scope>IDENTIFICATION BY MASS SPECTROMETRY [LARGE SCALE ANALYSIS]</scope>
    <source>
        <strain>ATCC 25618 / H37Rv</strain>
    </source>
</reference>
<reference key="5">
    <citation type="journal article" date="2012" name="PLoS ONE">
        <title>A novel role of the PrpR as a transcription factor involved in the regulation of methylcitrate pathway in Mycobacterium tuberculosis.</title>
        <authorList>
            <person name="Masiewicz P."/>
            <person name="Brzostek A."/>
            <person name="Wolanski M."/>
            <person name="Dziadek J."/>
            <person name="Zakrzewska-Czerwinska J."/>
        </authorList>
    </citation>
    <scope>INDUCTION</scope>
    <source>
        <strain>ATCC 25618 / H37Rv</strain>
    </source>
</reference>
<dbReference type="EMBL" id="AL123456">
    <property type="protein sequence ID" value="CCP43198.1"/>
    <property type="molecule type" value="Genomic_DNA"/>
</dbReference>
<dbReference type="PIR" id="E70828">
    <property type="entry name" value="E70828"/>
</dbReference>
<dbReference type="RefSeq" id="NP_214979.1">
    <property type="nucleotide sequence ID" value="NC_000962.3"/>
</dbReference>
<dbReference type="RefSeq" id="WP_003898467.1">
    <property type="nucleotide sequence ID" value="NZ_NVQJ01000002.1"/>
</dbReference>
<dbReference type="SMR" id="P9WMI1"/>
<dbReference type="STRING" id="83332.Rv0465c"/>
<dbReference type="PaxDb" id="83332-Rv0465c"/>
<dbReference type="DNASU" id="886320"/>
<dbReference type="GeneID" id="886320"/>
<dbReference type="KEGG" id="mtu:Rv0465c"/>
<dbReference type="KEGG" id="mtv:RVBD_0465c"/>
<dbReference type="TubercuList" id="Rv0465c"/>
<dbReference type="eggNOG" id="COG1396">
    <property type="taxonomic scope" value="Bacteria"/>
</dbReference>
<dbReference type="eggNOG" id="COG3800">
    <property type="taxonomic scope" value="Bacteria"/>
</dbReference>
<dbReference type="InParanoid" id="P9WMI1"/>
<dbReference type="OrthoDB" id="9810578at2"/>
<dbReference type="PhylomeDB" id="P9WMI1"/>
<dbReference type="Proteomes" id="UP000001584">
    <property type="component" value="Chromosome"/>
</dbReference>
<dbReference type="GO" id="GO:0005886">
    <property type="term" value="C:plasma membrane"/>
    <property type="evidence" value="ECO:0007005"/>
    <property type="project" value="MTBBASE"/>
</dbReference>
<dbReference type="GO" id="GO:0003677">
    <property type="term" value="F:DNA binding"/>
    <property type="evidence" value="ECO:0000314"/>
    <property type="project" value="UniProtKB"/>
</dbReference>
<dbReference type="GO" id="GO:0003700">
    <property type="term" value="F:DNA-binding transcription factor activity"/>
    <property type="evidence" value="ECO:0000318"/>
    <property type="project" value="GO_Central"/>
</dbReference>
<dbReference type="GO" id="GO:0006355">
    <property type="term" value="P:regulation of DNA-templated transcription"/>
    <property type="evidence" value="ECO:0000315"/>
    <property type="project" value="UniProtKB"/>
</dbReference>
<dbReference type="GO" id="GO:0001666">
    <property type="term" value="P:response to hypoxia"/>
    <property type="evidence" value="ECO:0000314"/>
    <property type="project" value="MTBBASE"/>
</dbReference>
<dbReference type="CDD" id="cd00093">
    <property type="entry name" value="HTH_XRE"/>
    <property type="match status" value="1"/>
</dbReference>
<dbReference type="FunFam" id="1.10.260.40:FF:000025">
    <property type="entry name" value="Cro/Cl family transcriptional regulator"/>
    <property type="match status" value="1"/>
</dbReference>
<dbReference type="Gene3D" id="1.10.260.40">
    <property type="entry name" value="lambda repressor-like DNA-binding domains"/>
    <property type="match status" value="1"/>
</dbReference>
<dbReference type="InterPro" id="IPR050807">
    <property type="entry name" value="Bact_TransReg_Diox"/>
</dbReference>
<dbReference type="InterPro" id="IPR001387">
    <property type="entry name" value="Cro/C1-type_HTH"/>
</dbReference>
<dbReference type="InterPro" id="IPR026281">
    <property type="entry name" value="HTH_RamB"/>
</dbReference>
<dbReference type="InterPro" id="IPR010359">
    <property type="entry name" value="IrrE_HExxH"/>
</dbReference>
<dbReference type="InterPro" id="IPR010982">
    <property type="entry name" value="Lambda_DNA-bd_dom_sf"/>
</dbReference>
<dbReference type="InterPro" id="IPR018653">
    <property type="entry name" value="ScfR_C"/>
</dbReference>
<dbReference type="NCBIfam" id="NF038139">
    <property type="entry name" value="Reg_Aceta_RamB"/>
    <property type="match status" value="1"/>
</dbReference>
<dbReference type="PANTHER" id="PTHR46797">
    <property type="entry name" value="HTH-TYPE TRANSCRIPTIONAL REGULATOR"/>
    <property type="match status" value="1"/>
</dbReference>
<dbReference type="PANTHER" id="PTHR46797:SF23">
    <property type="entry name" value="HTH-TYPE TRANSCRIPTIONAL REGULATOR SUTR"/>
    <property type="match status" value="1"/>
</dbReference>
<dbReference type="Pfam" id="PF01381">
    <property type="entry name" value="HTH_3"/>
    <property type="match status" value="1"/>
</dbReference>
<dbReference type="Pfam" id="PF06114">
    <property type="entry name" value="Peptidase_M78"/>
    <property type="match status" value="1"/>
</dbReference>
<dbReference type="Pfam" id="PF09856">
    <property type="entry name" value="ScfRs"/>
    <property type="match status" value="1"/>
</dbReference>
<dbReference type="PIRSF" id="PIRSF019251">
    <property type="entry name" value="Rv0465c"/>
    <property type="match status" value="1"/>
</dbReference>
<dbReference type="SMART" id="SM00530">
    <property type="entry name" value="HTH_XRE"/>
    <property type="match status" value="1"/>
</dbReference>
<dbReference type="SUPFAM" id="SSF47413">
    <property type="entry name" value="lambda repressor-like DNA-binding domains"/>
    <property type="match status" value="1"/>
</dbReference>
<dbReference type="PROSITE" id="PS50943">
    <property type="entry name" value="HTH_CROC1"/>
    <property type="match status" value="1"/>
</dbReference>
<gene>
    <name evidence="5" type="primary">ramB</name>
    <name type="ordered locus">Rv0465c</name>
</gene>
<feature type="chain" id="PRO_0000382634" description="HTH-type transcriptional regulator RamB">
    <location>
        <begin position="1"/>
        <end position="474"/>
    </location>
</feature>
<feature type="domain" description="HTH cro/C1-type" evidence="1 3">
    <location>
        <begin position="10"/>
        <end position="64"/>
    </location>
</feature>
<feature type="DNA-binding region" description="H-T-H motif" evidence="1">
    <location>
        <begin position="21"/>
        <end position="40"/>
    </location>
</feature>